<name>CCN3_MOUSE</name>
<organism>
    <name type="scientific">Mus musculus</name>
    <name type="common">Mouse</name>
    <dbReference type="NCBI Taxonomy" id="10090"/>
    <lineage>
        <taxon>Eukaryota</taxon>
        <taxon>Metazoa</taxon>
        <taxon>Chordata</taxon>
        <taxon>Craniata</taxon>
        <taxon>Vertebrata</taxon>
        <taxon>Euteleostomi</taxon>
        <taxon>Mammalia</taxon>
        <taxon>Eutheria</taxon>
        <taxon>Euarchontoglires</taxon>
        <taxon>Glires</taxon>
        <taxon>Rodentia</taxon>
        <taxon>Myomorpha</taxon>
        <taxon>Muroidea</taxon>
        <taxon>Muridae</taxon>
        <taxon>Murinae</taxon>
        <taxon>Mus</taxon>
        <taxon>Mus</taxon>
    </lineage>
</organism>
<gene>
    <name type="primary">Ccn3</name>
    <name evidence="20" type="synonym">Nov</name>
</gene>
<proteinExistence type="evidence at protein level"/>
<protein>
    <recommendedName>
        <fullName evidence="18">CCN family member 3</fullName>
    </recommendedName>
    <alternativeName>
        <fullName evidence="2">Cellular communication network factor 3</fullName>
    </alternativeName>
    <alternativeName>
        <fullName>Nephroblastoma-overexpressed gene protein homolog</fullName>
    </alternativeName>
    <alternativeName>
        <fullName>Protein NOV homolog</fullName>
        <shortName>NovH</shortName>
    </alternativeName>
</protein>
<accession>Q64299</accession>
<accession>Q8CA67</accession>
<dbReference type="EMBL" id="X97863">
    <property type="protein sequence ID" value="CAA66457.1"/>
    <property type="molecule type" value="Genomic_DNA"/>
</dbReference>
<dbReference type="EMBL" id="Y09257">
    <property type="protein sequence ID" value="CAA70454.1"/>
    <property type="molecule type" value="mRNA"/>
</dbReference>
<dbReference type="EMBL" id="X96585">
    <property type="protein sequence ID" value="CAA65404.1"/>
    <property type="molecule type" value="mRNA"/>
</dbReference>
<dbReference type="EMBL" id="AK039481">
    <property type="protein sequence ID" value="BAC30363.1"/>
    <property type="molecule type" value="mRNA"/>
</dbReference>
<dbReference type="EMBL" id="AK081944">
    <property type="protein sequence ID" value="BAC38378.1"/>
    <property type="molecule type" value="mRNA"/>
</dbReference>
<dbReference type="EMBL" id="BC003774">
    <property type="protein sequence ID" value="AAH03774.1"/>
    <property type="molecule type" value="mRNA"/>
</dbReference>
<dbReference type="CCDS" id="CCDS27471.1"/>
<dbReference type="RefSeq" id="NP_035060.1">
    <property type="nucleotide sequence ID" value="NM_010930.5"/>
</dbReference>
<dbReference type="SMR" id="Q64299"/>
<dbReference type="BioGRID" id="201813">
    <property type="interactions" value="2"/>
</dbReference>
<dbReference type="FunCoup" id="Q64299">
    <property type="interactions" value="167"/>
</dbReference>
<dbReference type="STRING" id="10090.ENSMUSP00000054389"/>
<dbReference type="GlyConnect" id="2635">
    <property type="glycosylation" value="3 N-Linked glycans (1 site)"/>
</dbReference>
<dbReference type="GlyCosmos" id="Q64299">
    <property type="glycosylation" value="2 sites, 3 glycans"/>
</dbReference>
<dbReference type="GlyGen" id="Q64299">
    <property type="glycosylation" value="3 sites, 4 N-linked glycans (1 site)"/>
</dbReference>
<dbReference type="iPTMnet" id="Q64299"/>
<dbReference type="PhosphoSitePlus" id="Q64299"/>
<dbReference type="jPOST" id="Q64299"/>
<dbReference type="PaxDb" id="10090-ENSMUSP00000054389"/>
<dbReference type="PeptideAtlas" id="Q64299"/>
<dbReference type="ProteomicsDB" id="293709"/>
<dbReference type="Antibodypedia" id="13650">
    <property type="antibodies" value="395 antibodies from 36 providers"/>
</dbReference>
<dbReference type="DNASU" id="18133"/>
<dbReference type="Ensembl" id="ENSMUST00000050027.9">
    <property type="protein sequence ID" value="ENSMUSP00000054389.9"/>
    <property type="gene ID" value="ENSMUSG00000037362.9"/>
</dbReference>
<dbReference type="GeneID" id="18133"/>
<dbReference type="KEGG" id="mmu:18133"/>
<dbReference type="UCSC" id="uc007vrn.1">
    <property type="organism name" value="mouse"/>
</dbReference>
<dbReference type="AGR" id="MGI:109185"/>
<dbReference type="CTD" id="4856"/>
<dbReference type="MGI" id="MGI:109185">
    <property type="gene designation" value="Ccn3"/>
</dbReference>
<dbReference type="VEuPathDB" id="HostDB:ENSMUSG00000037362"/>
<dbReference type="eggNOG" id="ENOG502QR9V">
    <property type="taxonomic scope" value="Eukaryota"/>
</dbReference>
<dbReference type="GeneTree" id="ENSGT00940000159963"/>
<dbReference type="HOGENOM" id="CLU_063247_1_0_1"/>
<dbReference type="InParanoid" id="Q64299"/>
<dbReference type="OMA" id="PRCNHDL"/>
<dbReference type="OrthoDB" id="365605at2759"/>
<dbReference type="PhylomeDB" id="Q64299"/>
<dbReference type="TreeFam" id="TF326070"/>
<dbReference type="BioGRID-ORCS" id="18133">
    <property type="hits" value="5 hits in 77 CRISPR screens"/>
</dbReference>
<dbReference type="PRO" id="PR:Q64299"/>
<dbReference type="Proteomes" id="UP000000589">
    <property type="component" value="Chromosome 15"/>
</dbReference>
<dbReference type="RNAct" id="Q64299">
    <property type="molecule type" value="protein"/>
</dbReference>
<dbReference type="Bgee" id="ENSMUSG00000037362">
    <property type="expression patterns" value="Expressed in aorta tunica media and 199 other cell types or tissues"/>
</dbReference>
<dbReference type="GO" id="GO:0005737">
    <property type="term" value="C:cytoplasm"/>
    <property type="evidence" value="ECO:0000250"/>
    <property type="project" value="UniProtKB"/>
</dbReference>
<dbReference type="GO" id="GO:0005829">
    <property type="term" value="C:cytosol"/>
    <property type="evidence" value="ECO:0007669"/>
    <property type="project" value="Ensembl"/>
</dbReference>
<dbReference type="GO" id="GO:0005576">
    <property type="term" value="C:extracellular region"/>
    <property type="evidence" value="ECO:0000314"/>
    <property type="project" value="UniProtKB"/>
</dbReference>
<dbReference type="GO" id="GO:0005615">
    <property type="term" value="C:extracellular space"/>
    <property type="evidence" value="ECO:0007005"/>
    <property type="project" value="BHF-UCL"/>
</dbReference>
<dbReference type="GO" id="GO:0005921">
    <property type="term" value="C:gap junction"/>
    <property type="evidence" value="ECO:0000250"/>
    <property type="project" value="UniProtKB"/>
</dbReference>
<dbReference type="GO" id="GO:0043231">
    <property type="term" value="C:intracellular membrane-bounded organelle"/>
    <property type="evidence" value="ECO:0007669"/>
    <property type="project" value="Ensembl"/>
</dbReference>
<dbReference type="GO" id="GO:0008083">
    <property type="term" value="F:growth factor activity"/>
    <property type="evidence" value="ECO:0007669"/>
    <property type="project" value="UniProtKB-KW"/>
</dbReference>
<dbReference type="GO" id="GO:0005179">
    <property type="term" value="F:hormone activity"/>
    <property type="evidence" value="ECO:0000314"/>
    <property type="project" value="UniProtKB"/>
</dbReference>
<dbReference type="GO" id="GO:0005178">
    <property type="term" value="F:integrin binding"/>
    <property type="evidence" value="ECO:0007669"/>
    <property type="project" value="Ensembl"/>
</dbReference>
<dbReference type="GO" id="GO:0005112">
    <property type="term" value="F:Notch binding"/>
    <property type="evidence" value="ECO:0007669"/>
    <property type="project" value="Ensembl"/>
</dbReference>
<dbReference type="GO" id="GO:0001525">
    <property type="term" value="P:angiogenesis"/>
    <property type="evidence" value="ECO:0000250"/>
    <property type="project" value="UniProtKB"/>
</dbReference>
<dbReference type="GO" id="GO:1990523">
    <property type="term" value="P:bone regeneration"/>
    <property type="evidence" value="ECO:0000315"/>
    <property type="project" value="UniProtKB"/>
</dbReference>
<dbReference type="GO" id="GO:0033627">
    <property type="term" value="P:cell adhesion mediated by integrin"/>
    <property type="evidence" value="ECO:0000250"/>
    <property type="project" value="UniProtKB"/>
</dbReference>
<dbReference type="GO" id="GO:0060326">
    <property type="term" value="P:cell chemotaxis"/>
    <property type="evidence" value="ECO:0000250"/>
    <property type="project" value="UniProtKB"/>
</dbReference>
<dbReference type="GO" id="GO:0002062">
    <property type="term" value="P:chondrocyte differentiation"/>
    <property type="evidence" value="ECO:0000250"/>
    <property type="project" value="UniProtKB"/>
</dbReference>
<dbReference type="GO" id="GO:0035767">
    <property type="term" value="P:endothelial cell chemotaxis"/>
    <property type="evidence" value="ECO:0000250"/>
    <property type="project" value="UniProtKB"/>
</dbReference>
<dbReference type="GO" id="GO:0071603">
    <property type="term" value="P:endothelial cell-cell adhesion"/>
    <property type="evidence" value="ECO:0000250"/>
    <property type="project" value="UniProtKB"/>
</dbReference>
<dbReference type="GO" id="GO:0010761">
    <property type="term" value="P:fibroblast migration"/>
    <property type="evidence" value="ECO:0000250"/>
    <property type="project" value="UniProtKB"/>
</dbReference>
<dbReference type="GO" id="GO:0061484">
    <property type="term" value="P:hematopoietic stem cell homeostasis"/>
    <property type="evidence" value="ECO:0007669"/>
    <property type="project" value="Ensembl"/>
</dbReference>
<dbReference type="GO" id="GO:0030308">
    <property type="term" value="P:negative regulation of cell growth"/>
    <property type="evidence" value="ECO:0000250"/>
    <property type="project" value="UniProtKB"/>
</dbReference>
<dbReference type="GO" id="GO:1902731">
    <property type="term" value="P:negative regulation of chondrocyte proliferation"/>
    <property type="evidence" value="ECO:0000250"/>
    <property type="project" value="UniProtKB"/>
</dbReference>
<dbReference type="GO" id="GO:0050728">
    <property type="term" value="P:negative regulation of inflammatory response"/>
    <property type="evidence" value="ECO:0000315"/>
    <property type="project" value="UniProtKB"/>
</dbReference>
<dbReference type="GO" id="GO:0046676">
    <property type="term" value="P:negative regulation of insulin secretion"/>
    <property type="evidence" value="ECO:0000314"/>
    <property type="project" value="UniProtKB"/>
</dbReference>
<dbReference type="GO" id="GO:0090027">
    <property type="term" value="P:negative regulation of monocyte chemotaxis"/>
    <property type="evidence" value="ECO:0000250"/>
    <property type="project" value="UniProtKB"/>
</dbReference>
<dbReference type="GO" id="GO:0010832">
    <property type="term" value="P:negative regulation of myotube differentiation"/>
    <property type="evidence" value="ECO:0000250"/>
    <property type="project" value="UniProtKB"/>
</dbReference>
<dbReference type="GO" id="GO:1901223">
    <property type="term" value="P:negative regulation of non-canonical NF-kappaB signal transduction"/>
    <property type="evidence" value="ECO:0000250"/>
    <property type="project" value="UniProtKB"/>
</dbReference>
<dbReference type="GO" id="GO:1904057">
    <property type="term" value="P:negative regulation of sensory perception of pain"/>
    <property type="evidence" value="ECO:0000250"/>
    <property type="project" value="UniProtKB"/>
</dbReference>
<dbReference type="GO" id="GO:0060392">
    <property type="term" value="P:negative regulation of SMAD protein signal transduction"/>
    <property type="evidence" value="ECO:0000315"/>
    <property type="project" value="UniProtKB"/>
</dbReference>
<dbReference type="GO" id="GO:0045747">
    <property type="term" value="P:positive regulation of Notch signaling pathway"/>
    <property type="evidence" value="ECO:0000250"/>
    <property type="project" value="UniProtKB"/>
</dbReference>
<dbReference type="GO" id="GO:0045778">
    <property type="term" value="P:positive regulation of ossification"/>
    <property type="evidence" value="ECO:0000314"/>
    <property type="project" value="UniProtKB"/>
</dbReference>
<dbReference type="GO" id="GO:0010468">
    <property type="term" value="P:regulation of gene expression"/>
    <property type="evidence" value="ECO:0000266"/>
    <property type="project" value="MGI"/>
</dbReference>
<dbReference type="GO" id="GO:0014909">
    <property type="term" value="P:smooth muscle cell migration"/>
    <property type="evidence" value="ECO:0000250"/>
    <property type="project" value="UniProtKB"/>
</dbReference>
<dbReference type="GO" id="GO:0048659">
    <property type="term" value="P:smooth muscle cell proliferation"/>
    <property type="evidence" value="ECO:0000315"/>
    <property type="project" value="UniProtKB"/>
</dbReference>
<dbReference type="GO" id="GO:0044342">
    <property type="term" value="P:type B pancreatic cell proliferation"/>
    <property type="evidence" value="ECO:0000314"/>
    <property type="project" value="UniProtKB"/>
</dbReference>
<dbReference type="FunFam" id="2.20.100.10:FF:000046">
    <property type="entry name" value="Cellular communication network factor 4"/>
    <property type="match status" value="1"/>
</dbReference>
<dbReference type="Gene3D" id="2.10.70.10">
    <property type="entry name" value="Complement Module, domain 1"/>
    <property type="match status" value="1"/>
</dbReference>
<dbReference type="Gene3D" id="2.20.100.10">
    <property type="entry name" value="Thrombospondin type-1 (TSP1) repeat"/>
    <property type="match status" value="1"/>
</dbReference>
<dbReference type="InterPro" id="IPR050941">
    <property type="entry name" value="CCN"/>
</dbReference>
<dbReference type="InterPro" id="IPR006207">
    <property type="entry name" value="Cys_knot_C"/>
</dbReference>
<dbReference type="InterPro" id="IPR006208">
    <property type="entry name" value="Glyco_hormone_CN"/>
</dbReference>
<dbReference type="InterPro" id="IPR009030">
    <property type="entry name" value="Growth_fac_rcpt_cys_sf"/>
</dbReference>
<dbReference type="InterPro" id="IPR000867">
    <property type="entry name" value="IGFBP-like"/>
</dbReference>
<dbReference type="InterPro" id="IPR012395">
    <property type="entry name" value="IGFBP_CNN"/>
</dbReference>
<dbReference type="InterPro" id="IPR017891">
    <property type="entry name" value="Insulin_GF-bd_Cys-rich_CS"/>
</dbReference>
<dbReference type="InterPro" id="IPR043973">
    <property type="entry name" value="TSP1_CCN"/>
</dbReference>
<dbReference type="InterPro" id="IPR000884">
    <property type="entry name" value="TSP1_rpt"/>
</dbReference>
<dbReference type="InterPro" id="IPR036383">
    <property type="entry name" value="TSP1_rpt_sf"/>
</dbReference>
<dbReference type="InterPro" id="IPR001007">
    <property type="entry name" value="VWF_dom"/>
</dbReference>
<dbReference type="PANTHER" id="PTHR11348:SF8">
    <property type="entry name" value="CCN FAMILY MEMBER 3"/>
    <property type="match status" value="1"/>
</dbReference>
<dbReference type="PANTHER" id="PTHR11348">
    <property type="entry name" value="CONNECTIVE TISSUE GROWTH FACTOR-RELATED"/>
    <property type="match status" value="1"/>
</dbReference>
<dbReference type="Pfam" id="PF00007">
    <property type="entry name" value="Cys_knot"/>
    <property type="match status" value="1"/>
</dbReference>
<dbReference type="Pfam" id="PF00219">
    <property type="entry name" value="IGFBP"/>
    <property type="match status" value="1"/>
</dbReference>
<dbReference type="Pfam" id="PF19035">
    <property type="entry name" value="TSP1_CCN"/>
    <property type="match status" value="1"/>
</dbReference>
<dbReference type="Pfam" id="PF00093">
    <property type="entry name" value="VWC"/>
    <property type="match status" value="1"/>
</dbReference>
<dbReference type="PIRSF" id="PIRSF036495">
    <property type="entry name" value="IGFBP_rP_CNN"/>
    <property type="match status" value="1"/>
</dbReference>
<dbReference type="SMART" id="SM00041">
    <property type="entry name" value="CT"/>
    <property type="match status" value="1"/>
</dbReference>
<dbReference type="SMART" id="SM00121">
    <property type="entry name" value="IB"/>
    <property type="match status" value="1"/>
</dbReference>
<dbReference type="SMART" id="SM00209">
    <property type="entry name" value="TSP1"/>
    <property type="match status" value="1"/>
</dbReference>
<dbReference type="SMART" id="SM00214">
    <property type="entry name" value="VWC"/>
    <property type="match status" value="1"/>
</dbReference>
<dbReference type="SUPFAM" id="SSF57603">
    <property type="entry name" value="FnI-like domain"/>
    <property type="match status" value="1"/>
</dbReference>
<dbReference type="SUPFAM" id="SSF57184">
    <property type="entry name" value="Growth factor receptor domain"/>
    <property type="match status" value="1"/>
</dbReference>
<dbReference type="SUPFAM" id="SSF82895">
    <property type="entry name" value="TSP-1 type 1 repeat"/>
    <property type="match status" value="1"/>
</dbReference>
<dbReference type="PROSITE" id="PS01185">
    <property type="entry name" value="CTCK_1"/>
    <property type="match status" value="1"/>
</dbReference>
<dbReference type="PROSITE" id="PS01225">
    <property type="entry name" value="CTCK_2"/>
    <property type="match status" value="1"/>
</dbReference>
<dbReference type="PROSITE" id="PS00222">
    <property type="entry name" value="IGFBP_N_1"/>
    <property type="match status" value="1"/>
</dbReference>
<dbReference type="PROSITE" id="PS51323">
    <property type="entry name" value="IGFBP_N_2"/>
    <property type="match status" value="1"/>
</dbReference>
<dbReference type="PROSITE" id="PS50092">
    <property type="entry name" value="TSP1"/>
    <property type="match status" value="1"/>
</dbReference>
<dbReference type="PROSITE" id="PS01208">
    <property type="entry name" value="VWFC_1"/>
    <property type="match status" value="1"/>
</dbReference>
<dbReference type="PROSITE" id="PS50184">
    <property type="entry name" value="VWFC_2"/>
    <property type="match status" value="1"/>
</dbReference>
<evidence type="ECO:0000250" key="1"/>
<evidence type="ECO:0000250" key="2">
    <source>
        <dbReference type="UniProtKB" id="P48745"/>
    </source>
</evidence>
<evidence type="ECO:0000250" key="3">
    <source>
        <dbReference type="UniProtKB" id="Q9QZQ5"/>
    </source>
</evidence>
<evidence type="ECO:0000255" key="4"/>
<evidence type="ECO:0000255" key="5">
    <source>
        <dbReference type="PROSITE-ProRule" id="PRU00039"/>
    </source>
</evidence>
<evidence type="ECO:0000255" key="6">
    <source>
        <dbReference type="PROSITE-ProRule" id="PRU00210"/>
    </source>
</evidence>
<evidence type="ECO:0000255" key="7">
    <source>
        <dbReference type="PROSITE-ProRule" id="PRU00220"/>
    </source>
</evidence>
<evidence type="ECO:0000255" key="8">
    <source>
        <dbReference type="PROSITE-ProRule" id="PRU00653"/>
    </source>
</evidence>
<evidence type="ECO:0000269" key="9">
    <source>
    </source>
</evidence>
<evidence type="ECO:0000269" key="10">
    <source>
    </source>
</evidence>
<evidence type="ECO:0000269" key="11">
    <source>
    </source>
</evidence>
<evidence type="ECO:0000269" key="12">
    <source>
    </source>
</evidence>
<evidence type="ECO:0000269" key="13">
    <source>
    </source>
</evidence>
<evidence type="ECO:0000269" key="14">
    <source>
    </source>
</evidence>
<evidence type="ECO:0000269" key="15">
    <source>
    </source>
</evidence>
<evidence type="ECO:0000269" key="16">
    <source>
    </source>
</evidence>
<evidence type="ECO:0000269" key="17">
    <source>
    </source>
</evidence>
<evidence type="ECO:0000305" key="18"/>
<evidence type="ECO:0000305" key="19">
    <source>
    </source>
</evidence>
<evidence type="ECO:0000312" key="20">
    <source>
        <dbReference type="MGI" id="MGI:109185"/>
    </source>
</evidence>
<feature type="signal peptide" evidence="4">
    <location>
        <begin position="1"/>
        <end position="21"/>
    </location>
</feature>
<feature type="chain" id="PRO_0000014416" description="CCN family member 3">
    <location>
        <begin position="22"/>
        <end position="354"/>
    </location>
</feature>
<feature type="domain" description="IGFBP N-terminal" evidence="8">
    <location>
        <begin position="25"/>
        <end position="99"/>
    </location>
</feature>
<feature type="domain" description="VWFC" evidence="7">
    <location>
        <begin position="102"/>
        <end position="168"/>
    </location>
</feature>
<feature type="domain" description="TSP type-1" evidence="6">
    <location>
        <begin position="202"/>
        <end position="247"/>
    </location>
</feature>
<feature type="domain" description="CTCK" evidence="5">
    <location>
        <begin position="261"/>
        <end position="335"/>
    </location>
</feature>
<feature type="lipid moiety-binding region" description="S-palmitoyl cysteine" evidence="19">
    <location>
        <position position="241"/>
    </location>
</feature>
<feature type="glycosylation site" description="N-linked (GlcNAc...) asparagine" evidence="4">
    <location>
        <position position="91"/>
    </location>
</feature>
<feature type="glycosylation site" description="N-linked (GlcNAc...) asparagine" evidence="4">
    <location>
        <position position="277"/>
    </location>
</feature>
<feature type="disulfide bond" evidence="8">
    <location>
        <begin position="29"/>
        <end position="55"/>
    </location>
</feature>
<feature type="disulfide bond" evidence="8">
    <location>
        <begin position="33"/>
        <end position="57"/>
    </location>
</feature>
<feature type="disulfide bond" evidence="8">
    <location>
        <begin position="37"/>
        <end position="58"/>
    </location>
</feature>
<feature type="disulfide bond" evidence="8">
    <location>
        <begin position="44"/>
        <end position="61"/>
    </location>
</feature>
<feature type="disulfide bond" evidence="8">
    <location>
        <begin position="69"/>
        <end position="83"/>
    </location>
</feature>
<feature type="disulfide bond" evidence="8">
    <location>
        <begin position="75"/>
        <end position="96"/>
    </location>
</feature>
<feature type="disulfide bond" evidence="1">
    <location>
        <begin position="261"/>
        <end position="298"/>
    </location>
</feature>
<feature type="disulfide bond" evidence="1">
    <location>
        <begin position="278"/>
        <end position="312"/>
    </location>
</feature>
<feature type="disulfide bond" evidence="1">
    <location>
        <begin position="289"/>
        <end position="328"/>
    </location>
</feature>
<feature type="disulfide bond" evidence="1">
    <location>
        <begin position="292"/>
        <end position="330"/>
    </location>
</feature>
<feature type="disulfide bond" evidence="1">
    <location>
        <begin position="297"/>
        <end position="334"/>
    </location>
</feature>
<feature type="mutagenesis site" description="No effect on extracellular secretion." evidence="16">
    <original>N</original>
    <variation>Q</variation>
    <location>
        <position position="227"/>
    </location>
</feature>
<feature type="mutagenesis site" description="No effect on extracellular secretion." evidence="16">
    <original>N</original>
    <variation>Q</variation>
    <location>
        <position position="229"/>
    </location>
</feature>
<feature type="mutagenesis site" description="Abolishes extracellular secretion. Inhibits axonal growth of callosal projections when overexpressed." evidence="16">
    <original>C</original>
    <variation>A</variation>
    <location>
        <position position="241"/>
    </location>
</feature>
<feature type="mutagenesis site" description="Reduces extracellular secretion. No significant effect on axonal growth of callosal projections when overexpressed." evidence="16">
    <original>C</original>
    <variation>A</variation>
    <location>
        <position position="246"/>
    </location>
</feature>
<feature type="sequence conflict" description="In Ref. 3; BAC30363." evidence="18" ref="3">
    <original>R</original>
    <variation>G</variation>
    <location>
        <position position="6"/>
    </location>
</feature>
<sequence>MSLFLRKRCLCLGFLLFHLLSQVSASLRCPSRCPPKCPSISPTCAPGVRSVLDGCSCCPVCARQRGESCSEMRPCDQSSGLYCDRSADPNNQTGICMVPEGDNCVFDGVIYRNGEKFEPNCQYFCTCRDGQIGCLPRCQLDVLLPGPDCPAPRKVAVPGECCEKWTCGSDEQGTQGTLGGLALPAYRPEATVGVEVSDSSINCIEQTTEWSACSKSCGMGVSTRVTNRNRQCEMVKQTRLCIVRPCEQEPEEVTDKKGKKCLRTKKSLKAIHLQFENCTSLYTYKPRFCGVCSDGRCCTPHNTKTIQVEFQCLPGEIIKKPVMVIGTCTCYSNCPQNNEAFLQDLELKTSRGEI</sequence>
<reference key="1">
    <citation type="journal article" date="1996" name="Genomics">
        <title>Genomic structure and chromosomal mapping of the mouse nov gene.</title>
        <authorList>
            <person name="Snaith M.R."/>
            <person name="Natarajan D."/>
            <person name="Taylor L.B."/>
            <person name="Choi C.P."/>
            <person name="Martinerie C."/>
            <person name="Perbal B."/>
            <person name="Schofield P.N."/>
            <person name="Boulter C.A."/>
        </authorList>
    </citation>
    <scope>NUCLEOTIDE SEQUENCE [GENOMIC DNA / MRNA]</scope>
    <source>
        <strain>129/Sv</strain>
        <strain>ICR</strain>
        <tissue>Brain</tissue>
    </source>
</reference>
<reference key="2">
    <citation type="journal article" date="1996" name="Oncogene">
        <title>Regulation of nov by WT1: a potential role for nov in nephrogenesis.</title>
        <authorList>
            <person name="Martinerie C."/>
            <person name="Chevalier G."/>
            <person name="Rauscher F.J. III"/>
            <person name="Perbal B."/>
        </authorList>
    </citation>
    <scope>NUCLEOTIDE SEQUENCE [MRNA]</scope>
    <source>
        <strain>C57BL/6J</strain>
    </source>
</reference>
<reference key="3">
    <citation type="journal article" date="2005" name="Science">
        <title>The transcriptional landscape of the mammalian genome.</title>
        <authorList>
            <person name="Carninci P."/>
            <person name="Kasukawa T."/>
            <person name="Katayama S."/>
            <person name="Gough J."/>
            <person name="Frith M.C."/>
            <person name="Maeda N."/>
            <person name="Oyama R."/>
            <person name="Ravasi T."/>
            <person name="Lenhard B."/>
            <person name="Wells C."/>
            <person name="Kodzius R."/>
            <person name="Shimokawa K."/>
            <person name="Bajic V.B."/>
            <person name="Brenner S.E."/>
            <person name="Batalov S."/>
            <person name="Forrest A.R."/>
            <person name="Zavolan M."/>
            <person name="Davis M.J."/>
            <person name="Wilming L.G."/>
            <person name="Aidinis V."/>
            <person name="Allen J.E."/>
            <person name="Ambesi-Impiombato A."/>
            <person name="Apweiler R."/>
            <person name="Aturaliya R.N."/>
            <person name="Bailey T.L."/>
            <person name="Bansal M."/>
            <person name="Baxter L."/>
            <person name="Beisel K.W."/>
            <person name="Bersano T."/>
            <person name="Bono H."/>
            <person name="Chalk A.M."/>
            <person name="Chiu K.P."/>
            <person name="Choudhary V."/>
            <person name="Christoffels A."/>
            <person name="Clutterbuck D.R."/>
            <person name="Crowe M.L."/>
            <person name="Dalla E."/>
            <person name="Dalrymple B.P."/>
            <person name="de Bono B."/>
            <person name="Della Gatta G."/>
            <person name="di Bernardo D."/>
            <person name="Down T."/>
            <person name="Engstrom P."/>
            <person name="Fagiolini M."/>
            <person name="Faulkner G."/>
            <person name="Fletcher C.F."/>
            <person name="Fukushima T."/>
            <person name="Furuno M."/>
            <person name="Futaki S."/>
            <person name="Gariboldi M."/>
            <person name="Georgii-Hemming P."/>
            <person name="Gingeras T.R."/>
            <person name="Gojobori T."/>
            <person name="Green R.E."/>
            <person name="Gustincich S."/>
            <person name="Harbers M."/>
            <person name="Hayashi Y."/>
            <person name="Hensch T.K."/>
            <person name="Hirokawa N."/>
            <person name="Hill D."/>
            <person name="Huminiecki L."/>
            <person name="Iacono M."/>
            <person name="Ikeo K."/>
            <person name="Iwama A."/>
            <person name="Ishikawa T."/>
            <person name="Jakt M."/>
            <person name="Kanapin A."/>
            <person name="Katoh M."/>
            <person name="Kawasawa Y."/>
            <person name="Kelso J."/>
            <person name="Kitamura H."/>
            <person name="Kitano H."/>
            <person name="Kollias G."/>
            <person name="Krishnan S.P."/>
            <person name="Kruger A."/>
            <person name="Kummerfeld S.K."/>
            <person name="Kurochkin I.V."/>
            <person name="Lareau L.F."/>
            <person name="Lazarevic D."/>
            <person name="Lipovich L."/>
            <person name="Liu J."/>
            <person name="Liuni S."/>
            <person name="McWilliam S."/>
            <person name="Madan Babu M."/>
            <person name="Madera M."/>
            <person name="Marchionni L."/>
            <person name="Matsuda H."/>
            <person name="Matsuzawa S."/>
            <person name="Miki H."/>
            <person name="Mignone F."/>
            <person name="Miyake S."/>
            <person name="Morris K."/>
            <person name="Mottagui-Tabar S."/>
            <person name="Mulder N."/>
            <person name="Nakano N."/>
            <person name="Nakauchi H."/>
            <person name="Ng P."/>
            <person name="Nilsson R."/>
            <person name="Nishiguchi S."/>
            <person name="Nishikawa S."/>
            <person name="Nori F."/>
            <person name="Ohara O."/>
            <person name="Okazaki Y."/>
            <person name="Orlando V."/>
            <person name="Pang K.C."/>
            <person name="Pavan W.J."/>
            <person name="Pavesi G."/>
            <person name="Pesole G."/>
            <person name="Petrovsky N."/>
            <person name="Piazza S."/>
            <person name="Reed J."/>
            <person name="Reid J.F."/>
            <person name="Ring B.Z."/>
            <person name="Ringwald M."/>
            <person name="Rost B."/>
            <person name="Ruan Y."/>
            <person name="Salzberg S.L."/>
            <person name="Sandelin A."/>
            <person name="Schneider C."/>
            <person name="Schoenbach C."/>
            <person name="Sekiguchi K."/>
            <person name="Semple C.A."/>
            <person name="Seno S."/>
            <person name="Sessa L."/>
            <person name="Sheng Y."/>
            <person name="Shibata Y."/>
            <person name="Shimada H."/>
            <person name="Shimada K."/>
            <person name="Silva D."/>
            <person name="Sinclair B."/>
            <person name="Sperling S."/>
            <person name="Stupka E."/>
            <person name="Sugiura K."/>
            <person name="Sultana R."/>
            <person name="Takenaka Y."/>
            <person name="Taki K."/>
            <person name="Tammoja K."/>
            <person name="Tan S.L."/>
            <person name="Tang S."/>
            <person name="Taylor M.S."/>
            <person name="Tegner J."/>
            <person name="Teichmann S.A."/>
            <person name="Ueda H.R."/>
            <person name="van Nimwegen E."/>
            <person name="Verardo R."/>
            <person name="Wei C.L."/>
            <person name="Yagi K."/>
            <person name="Yamanishi H."/>
            <person name="Zabarovsky E."/>
            <person name="Zhu S."/>
            <person name="Zimmer A."/>
            <person name="Hide W."/>
            <person name="Bult C."/>
            <person name="Grimmond S.M."/>
            <person name="Teasdale R.D."/>
            <person name="Liu E.T."/>
            <person name="Brusic V."/>
            <person name="Quackenbush J."/>
            <person name="Wahlestedt C."/>
            <person name="Mattick J.S."/>
            <person name="Hume D.A."/>
            <person name="Kai C."/>
            <person name="Sasaki D."/>
            <person name="Tomaru Y."/>
            <person name="Fukuda S."/>
            <person name="Kanamori-Katayama M."/>
            <person name="Suzuki M."/>
            <person name="Aoki J."/>
            <person name="Arakawa T."/>
            <person name="Iida J."/>
            <person name="Imamura K."/>
            <person name="Itoh M."/>
            <person name="Kato T."/>
            <person name="Kawaji H."/>
            <person name="Kawagashira N."/>
            <person name="Kawashima T."/>
            <person name="Kojima M."/>
            <person name="Kondo S."/>
            <person name="Konno H."/>
            <person name="Nakano K."/>
            <person name="Ninomiya N."/>
            <person name="Nishio T."/>
            <person name="Okada M."/>
            <person name="Plessy C."/>
            <person name="Shibata K."/>
            <person name="Shiraki T."/>
            <person name="Suzuki S."/>
            <person name="Tagami M."/>
            <person name="Waki K."/>
            <person name="Watahiki A."/>
            <person name="Okamura-Oho Y."/>
            <person name="Suzuki H."/>
            <person name="Kawai J."/>
            <person name="Hayashizaki Y."/>
        </authorList>
    </citation>
    <scope>NUCLEOTIDE SEQUENCE [LARGE SCALE MRNA]</scope>
    <source>
        <strain>C57BL/6J</strain>
        <tissue>Embryonic head</tissue>
        <tissue>Spinal cord</tissue>
    </source>
</reference>
<reference key="4">
    <citation type="journal article" date="2004" name="Genome Res.">
        <title>The status, quality, and expansion of the NIH full-length cDNA project: the Mammalian Gene Collection (MGC).</title>
        <authorList>
            <consortium name="The MGC Project Team"/>
        </authorList>
    </citation>
    <scope>NUCLEOTIDE SEQUENCE [LARGE SCALE MRNA]</scope>
    <source>
        <strain>Czech II</strain>
        <tissue>Mammary tumor</tissue>
    </source>
</reference>
<reference key="5">
    <citation type="journal article" date="2002" name="J. Biol. Chem.">
        <title>The nephroblastoma overexpressed gene (NOV/ccn3) protein associates with Notch1 extracellular domain and inhibits myoblast differentiation via Notch signaling pathway.</title>
        <authorList>
            <person name="Sakamoto K."/>
            <person name="Yamaguchi S."/>
            <person name="Ando R."/>
            <person name="Miyawaki A."/>
            <person name="Kabasawa Y."/>
            <person name="Takagi M."/>
            <person name="Li C.L."/>
            <person name="Perbal B."/>
            <person name="Katsube K."/>
        </authorList>
    </citation>
    <scope>INTERACTION WITH NOTCH1</scope>
</reference>
<reference key="6">
    <citation type="journal article" date="2004" name="J. Biol. Chem.">
        <title>CCN3 (NOV) interacts with connexin43 in C6 glioma cells: possible mechanism of connexin-mediated growth suppression.</title>
        <authorList>
            <person name="Fu C.T."/>
            <person name="Bechberger J.F."/>
            <person name="Ozog M.A."/>
            <person name="Perbal B."/>
            <person name="Naus C.C."/>
        </authorList>
    </citation>
    <scope>TISSUE SPECIFICITY</scope>
</reference>
<reference key="7">
    <citation type="journal article" date="2005" name="J. Biol. Chem.">
        <title>Integrin-dependent functions of the angiogenic inducer NOV (CCN3): implication in wound healing.</title>
        <authorList>
            <person name="Lin C.G."/>
            <person name="Chen C.C."/>
            <person name="Leu S.J."/>
            <person name="Grzeszkiewicz T.M."/>
            <person name="Lau L.F."/>
        </authorList>
    </citation>
    <scope>TISSUE SPECIFICITY</scope>
</reference>
<reference key="8">
    <citation type="journal article" date="2010" name="Arterioscler. Thromb. Vasc. Biol.">
        <title>CCN3 inhibits neointimal hyperplasia through modulation of smooth muscle cell growth and migration.</title>
        <authorList>
            <person name="Shimoyama T."/>
            <person name="Hiraoka S."/>
            <person name="Takemoto M."/>
            <person name="Koshizaka M."/>
            <person name="Tokuyama H."/>
            <person name="Tokuyama T."/>
            <person name="Watanabe A."/>
            <person name="Fujimoto M."/>
            <person name="Kawamura H."/>
            <person name="Sato S."/>
            <person name="Tsurutani Y."/>
            <person name="Saito Y."/>
            <person name="Perbal B."/>
            <person name="Koseki H."/>
            <person name="Yokote K."/>
        </authorList>
    </citation>
    <scope>FUNCTION</scope>
    <scope>DISRUPTION PHENOTYPE</scope>
    <scope>TISSUE SPECIFICITY</scope>
</reference>
<reference key="9">
    <citation type="journal article" date="2010" name="J. Cell Commun. Signal.">
        <title>A novel role of CCN3 in regulating endothelial inflammation.</title>
        <authorList>
            <person name="Lin Z."/>
            <person name="Natesan V."/>
            <person name="Shi H."/>
            <person name="Hamik A."/>
            <person name="Kawanami D."/>
            <person name="Hao C."/>
            <person name="Mahabaleshwar G.H."/>
            <person name="Wang W."/>
            <person name="Jin Z.G."/>
            <person name="Atkins G.B."/>
            <person name="Firth S.M."/>
            <person name="Rittie L."/>
            <person name="Perbal B."/>
            <person name="Jain M.K."/>
        </authorList>
    </citation>
    <scope>TISSUE SPECIFICITY</scope>
</reference>
<reference key="10">
    <citation type="journal article" date="2013" name="J. Biol. Chem.">
        <title>CCN3 protein participates in bone regeneration as an inhibitory factor.</title>
        <authorList>
            <person name="Matsushita Y."/>
            <person name="Sakamoto K."/>
            <person name="Tamamura Y."/>
            <person name="Shibata Y."/>
            <person name="Minamizato T."/>
            <person name="Kihara T."/>
            <person name="Ito M."/>
            <person name="Katsube K."/>
            <person name="Hiraoka S."/>
            <person name="Koseki H."/>
            <person name="Harada K."/>
            <person name="Yamaguchi A."/>
        </authorList>
    </citation>
    <scope>FUNCTION</scope>
    <scope>DISRUPTION PHENOTYPE</scope>
    <scope>DEVELOPMENTAL STAGE</scope>
</reference>
<reference key="11">
    <citation type="journal article" date="2013" name="PLoS ONE">
        <title>Nov/Ccn3, a novel transcriptional target of FoxO1, impairs pancreatic beta-cell function.</title>
        <authorList>
            <person name="Paradis R."/>
            <person name="Lazar N."/>
            <person name="Antinozzi P."/>
            <person name="Perbal B."/>
            <person name="Buteau J."/>
        </authorList>
    </citation>
    <scope>FUNCTION</scope>
    <scope>TISSUE SPECIFICITY</scope>
    <scope>SUBCELLULAR LOCATION</scope>
</reference>
<reference key="12">
    <citation type="journal article" date="2014" name="PLoS ONE">
        <title>Overexpression of CCN3 inhibits inflammation and progression of atherosclerosis in apolipoprotein E-deficient mice.</title>
        <authorList>
            <person name="Liu J."/>
            <person name="Ren Y."/>
            <person name="Kang L."/>
            <person name="Zhang L."/>
        </authorList>
    </citation>
    <scope>INDUCTION BY ATHEROSCLEROSIS</scope>
</reference>
<reference key="13">
    <citation type="journal article" date="2018" name="Biochem. Biophys. Res. Commun.">
        <title>CCN3 secretion is regulated by palmitoylation via ZDHHC22.</title>
        <authorList>
            <person name="Kim Y."/>
            <person name="Yang H."/>
            <person name="Min J.K."/>
            <person name="Park Y.J."/>
            <person name="Jeong S.H."/>
            <person name="Jang S.W."/>
            <person name="Shim S."/>
        </authorList>
    </citation>
    <scope>INTERACTION WITH ZDHHC22</scope>
    <scope>SUBCELLULAR LOCATION</scope>
    <scope>PROBABLE PALMITOYLATION AT CYS-241</scope>
    <scope>MUTAGENESIS OF ASN-227; ASN-229; CYS-241 AND CYS-246</scope>
</reference>
<reference key="14">
    <citation type="journal article" date="2024" name="Nature">
        <title>A maternal brain hormone that builds bone.</title>
        <authorList>
            <person name="Babey M.E."/>
            <person name="Krause W.C."/>
            <person name="Chen K."/>
            <person name="Herber C.B."/>
            <person name="Torok Z."/>
            <person name="Nikkanen J."/>
            <person name="Rodriguez R."/>
            <person name="Zhang X."/>
            <person name="Castro-Navarro F."/>
            <person name="Wang Y."/>
            <person name="Wheeler E.E."/>
            <person name="Villeda S."/>
            <person name="Leach J.K."/>
            <person name="Lane N.E."/>
            <person name="Scheller E.L."/>
            <person name="Chan C.K.F."/>
            <person name="Ambrosi T.H."/>
            <person name="Ingraham H.A."/>
        </authorList>
    </citation>
    <scope>FUNCTION</scope>
    <scope>SUBCELLULAR LOCATION</scope>
    <scope>DEVELOPMENTAL STAGE</scope>
    <scope>TISSUE SPECIFICITY</scope>
</reference>
<keyword id="KW-0965">Cell junction</keyword>
<keyword id="KW-0963">Cytoplasm</keyword>
<keyword id="KW-1015">Disulfide bond</keyword>
<keyword id="KW-0303">Gap junction</keyword>
<keyword id="KW-0325">Glycoprotein</keyword>
<keyword id="KW-0339">Growth factor</keyword>
<keyword id="KW-0372">Hormone</keyword>
<keyword id="KW-0449">Lipoprotein</keyword>
<keyword id="KW-0564">Palmitate</keyword>
<keyword id="KW-1185">Reference proteome</keyword>
<keyword id="KW-0964">Secreted</keyword>
<keyword id="KW-0732">Signal</keyword>
<comment type="function">
    <text evidence="2 3 13 14 15 17">Immediate-early protein playing a role in various cellular processes including proliferation, adhesion, migration, differentiation and survival. Acts by binding to integrins or membrane receptors such as NOTCH1. Essential regulator of hematopoietic stem and progenitor cell function. Inhibits myogenic differentiation through the activation of Notch-signaling pathway. Inhibits vascular smooth muscle cells proliferation by increasing expression of cell-cycle regulators such as CDKN2B or CDKN1A independently of TGFB1 signaling. Ligand of integrins ITGAV:ITGB3 and ITGA5:ITGB1, acts directly upon endothelial cells to stimulate pro-angiogenic activities and induces angiogenesis. In endothelial cells, supports cell adhesion, induces directed cell migration (chemotaxis) and promotes cell survival. Also plays a role in cutaneous wound healing acting as integrin receptor ligand. Supports skin fibroblast adhesion through ITGA5:ITGB1 and ITGA6:ITGB1 and induces fibroblast chemotaxis through ITGAV:ITGB5. Seems to enhance bFGF-induced DNA synthesis in fibroblasts (By similarity). Involved in bone regeneration as a negative regulator (PubMed:23653360). Enhances the articular chondrocytic phenotype, whereas it repressed the one representing endochondral ossification (By similarity). Impairs pancreatic beta-cell function, inhibits beta-cell proliferation and insulin secretion (PubMed:23705021). Plays a role as negative regulator of endothelial pro-inflammatory activation reducing monocyte adhesion, its anti-inflammatory effects occur secondary to the inhibition of NF-kappaB signaling pathway (By similarity). Contributes to the control and coordination of inflammatory processes in atherosclerosis (PubMed:24722330). Attenuates inflammatory pain through regulation of IL1B- and TNF-induced MMP9, MMP2 and CCL2 expression. Inhibits MMP9 expression through ITGB1 engagement (By similarity). Brain osteoanabolic hormone (PubMed:38987585). During lactation, maintains the maternal skeleton and viability of offspring (PubMed:38987585). In this context, may act on osteochondral skeletal stem cells (PubMed:38987585).</text>
</comment>
<comment type="subunit">
    <text evidence="2 16">Interacts with FBLN1. Interacts (via CTCK domain) with NOTCH1 (via the EGF-like repeat region). Interacts with GJA1/CX43. Interacts with ITGA5:ITGB1, ITGAV:ITGB3 and ITGAV:ITGB5. Interacts with ZDHHC22; the interaction may lead to CCN3 palmitoylation (PubMed:29287726).</text>
</comment>
<comment type="subcellular location">
    <subcellularLocation>
        <location evidence="14 16 17">Secreted</location>
    </subcellularLocation>
    <subcellularLocation>
        <location evidence="2">Cytoplasm</location>
    </subcellularLocation>
    <subcellularLocation>
        <location evidence="2">Cell junction</location>
        <location evidence="2">Gap junction</location>
    </subcellularLocation>
    <text evidence="3">Localizes at the gap junction in presence of GJA1.</text>
</comment>
<comment type="tissue specificity">
    <text evidence="9 10 11 12 13 14 17">Expressed in large vessels including the ascending aorta, carotid arteries, and the thoracic aorta, in medium-sized vessels such as coronary arteries and small pulmonary veins and also in small vessels. In addition, also found to be present in the heart (at protein level) (PubMed:21063504). Expressed in astrocytes (at protein level) (PubMed:15213231). Detected in brain, bone, lung and muscle tissues (PubMed:20139355, PubMed:23653360). Expressed in skin, expression highly increases 5 days post-wounding, peaking on the 7th day to decline after 9 days (PubMed:15611078). Expressed in pancreatic ducts and beta-cell islets (PubMed:23705021). Expressed in the brain, in arcuate nucleus ESR1/KISS1 neurons, during lactation (at protein level) (PubMed:38987585).</text>
</comment>
<comment type="developmental stage">
    <text evidence="13 17">Up-regulated in the early phase of bone regeneration (PubMed:23653360). Expressed in arcuate nucleus ESR1/KISS1 neurons of lactating dams. Weaning reduces expression in arcuate nucleus ESR1 neurons when examined 3 or 7 days after removal of pups. Not expressed in arcuate nucleus ESR1 neurons in virgin females, nor during the early and later stages of pregnancy (PubMed:38987585).</text>
</comment>
<comment type="induction">
    <text evidence="15">Expression is reduced in atherosclerosis progression.</text>
</comment>
<comment type="PTM">
    <text evidence="16">May be palmitoylated on Cys-241, which is important for extracellular secretion.</text>
</comment>
<comment type="disruption phenotype">
    <text evidence="11 15">Mutants develop normally but have enhanced arterial neointimal hyperplasia in response to injury (PubMed:20139355). Animals show an accelerated bone regeneration comparing to in wild-type mice (PubMed:24722330).</text>
</comment>
<comment type="similarity">
    <text evidence="18">Belongs to the CCN family.</text>
</comment>